<organism>
    <name type="scientific">Salmonella typhi</name>
    <dbReference type="NCBI Taxonomy" id="90370"/>
    <lineage>
        <taxon>Bacteria</taxon>
        <taxon>Pseudomonadati</taxon>
        <taxon>Pseudomonadota</taxon>
        <taxon>Gammaproteobacteria</taxon>
        <taxon>Enterobacterales</taxon>
        <taxon>Enterobacteriaceae</taxon>
        <taxon>Salmonella</taxon>
    </lineage>
</organism>
<sequence length="467" mass="50216">MVTVRREKDSMGVIEVPADKLWGAQTQRSLEHFRISTEKMPVSLIHALALTKRAAAKVNQDLGLLAAEKASAIIEAADEVLAGKHADEFPLAIWQTGSGTQSNMNMNEVLANRASEILGGVRGMERKVHPNDDVNKSQSSNDVFPTAMHVAALLALREHLIPQLSALTDTLRDKSHAFADIVKIGRTHLQDATPLTLGQEISGWVAMLEHNLRHIEHSLPHVAELALGGTAVGTGLNTHPEYARRVAEELATITAAPFVTAPNKFEALATCDALVQAHGALKGLAASLMKIANDVRWLASGPRCGIGEIAIPENEPGSSIMPGKVNPTQCEAVTMLCCQVMGNDVAINMGGASGNFELNVYRPMVIHNFLQTVRLLADGMASFNQHCASGIEPNRERITQLLNESLMLVTALNTHIGYDKAAEIAKKAHKEGLTLKASAVALGYLSDAEFDAWVRPELMVGSMTPGR</sequence>
<name>FUMC_SALTI</name>
<keyword id="KW-0963">Cytoplasm</keyword>
<keyword id="KW-0456">Lyase</keyword>
<keyword id="KW-0816">Tricarboxylic acid cycle</keyword>
<evidence type="ECO:0000255" key="1">
    <source>
        <dbReference type="HAMAP-Rule" id="MF_00743"/>
    </source>
</evidence>
<accession>Q8Z6R6</accession>
<feature type="chain" id="PRO_0000161308" description="Fumarate hydratase class II">
    <location>
        <begin position="1"/>
        <end position="467"/>
    </location>
</feature>
<feature type="active site" description="Proton donor/acceptor" evidence="1">
    <location>
        <position position="188"/>
    </location>
</feature>
<feature type="active site" evidence="1">
    <location>
        <position position="318"/>
    </location>
</feature>
<feature type="binding site" evidence="1">
    <location>
        <begin position="98"/>
        <end position="100"/>
    </location>
    <ligand>
        <name>substrate</name>
    </ligand>
</feature>
<feature type="binding site" evidence="1">
    <location>
        <position position="126"/>
    </location>
    <ligand>
        <name>substrate</name>
    </ligand>
</feature>
<feature type="binding site" description="in site B" evidence="1">
    <location>
        <begin position="129"/>
        <end position="132"/>
    </location>
    <ligand>
        <name>substrate</name>
    </ligand>
</feature>
<feature type="binding site" evidence="1">
    <location>
        <begin position="139"/>
        <end position="141"/>
    </location>
    <ligand>
        <name>substrate</name>
    </ligand>
</feature>
<feature type="binding site" evidence="1">
    <location>
        <position position="187"/>
    </location>
    <ligand>
        <name>substrate</name>
    </ligand>
</feature>
<feature type="binding site" evidence="1">
    <location>
        <position position="319"/>
    </location>
    <ligand>
        <name>substrate</name>
    </ligand>
</feature>
<feature type="binding site" evidence="1">
    <location>
        <begin position="324"/>
        <end position="326"/>
    </location>
    <ligand>
        <name>substrate</name>
    </ligand>
</feature>
<feature type="site" description="Important for catalytic activity" evidence="1">
    <location>
        <position position="331"/>
    </location>
</feature>
<proteinExistence type="inferred from homology"/>
<comment type="function">
    <text evidence="1">Involved in the TCA cycle. Catalyzes the stereospecific interconversion of fumarate to L-malate.</text>
</comment>
<comment type="catalytic activity">
    <reaction evidence="1">
        <text>(S)-malate = fumarate + H2O</text>
        <dbReference type="Rhea" id="RHEA:12460"/>
        <dbReference type="ChEBI" id="CHEBI:15377"/>
        <dbReference type="ChEBI" id="CHEBI:15589"/>
        <dbReference type="ChEBI" id="CHEBI:29806"/>
        <dbReference type="EC" id="4.2.1.2"/>
    </reaction>
</comment>
<comment type="pathway">
    <text evidence="1">Carbohydrate metabolism; tricarboxylic acid cycle; (S)-malate from fumarate: step 1/1.</text>
</comment>
<comment type="subunit">
    <text evidence="1">Homotetramer.</text>
</comment>
<comment type="subcellular location">
    <subcellularLocation>
        <location evidence="1">Cytoplasm</location>
    </subcellularLocation>
</comment>
<comment type="miscellaneous">
    <text evidence="1">There are 2 substrate-binding sites: the catalytic A site, and the non-catalytic B site that may play a role in the transfer of substrate or product between the active site and the solvent. Alternatively, the B site may bind allosteric effectors.</text>
</comment>
<comment type="similarity">
    <text evidence="1">Belongs to the class-II fumarase/aspartase family. Fumarase subfamily.</text>
</comment>
<reference key="1">
    <citation type="journal article" date="2001" name="Nature">
        <title>Complete genome sequence of a multiple drug resistant Salmonella enterica serovar Typhi CT18.</title>
        <authorList>
            <person name="Parkhill J."/>
            <person name="Dougan G."/>
            <person name="James K.D."/>
            <person name="Thomson N.R."/>
            <person name="Pickard D."/>
            <person name="Wain J."/>
            <person name="Churcher C.M."/>
            <person name="Mungall K.L."/>
            <person name="Bentley S.D."/>
            <person name="Holden M.T.G."/>
            <person name="Sebaihia M."/>
            <person name="Baker S."/>
            <person name="Basham D."/>
            <person name="Brooks K."/>
            <person name="Chillingworth T."/>
            <person name="Connerton P."/>
            <person name="Cronin A."/>
            <person name="Davis P."/>
            <person name="Davies R.M."/>
            <person name="Dowd L."/>
            <person name="White N."/>
            <person name="Farrar J."/>
            <person name="Feltwell T."/>
            <person name="Hamlin N."/>
            <person name="Haque A."/>
            <person name="Hien T.T."/>
            <person name="Holroyd S."/>
            <person name="Jagels K."/>
            <person name="Krogh A."/>
            <person name="Larsen T.S."/>
            <person name="Leather S."/>
            <person name="Moule S."/>
            <person name="O'Gaora P."/>
            <person name="Parry C."/>
            <person name="Quail M.A."/>
            <person name="Rutherford K.M."/>
            <person name="Simmonds M."/>
            <person name="Skelton J."/>
            <person name="Stevens K."/>
            <person name="Whitehead S."/>
            <person name="Barrell B.G."/>
        </authorList>
    </citation>
    <scope>NUCLEOTIDE SEQUENCE [LARGE SCALE GENOMIC DNA]</scope>
    <source>
        <strain>CT18</strain>
    </source>
</reference>
<reference key="2">
    <citation type="journal article" date="2003" name="J. Bacteriol.">
        <title>Comparative genomics of Salmonella enterica serovar Typhi strains Ty2 and CT18.</title>
        <authorList>
            <person name="Deng W."/>
            <person name="Liou S.-R."/>
            <person name="Plunkett G. III"/>
            <person name="Mayhew G.F."/>
            <person name="Rose D.J."/>
            <person name="Burland V."/>
            <person name="Kodoyianni V."/>
            <person name="Schwartz D.C."/>
            <person name="Blattner F.R."/>
        </authorList>
    </citation>
    <scope>NUCLEOTIDE SEQUENCE [LARGE SCALE GENOMIC DNA]</scope>
    <source>
        <strain>ATCC 700931 / Ty2</strain>
    </source>
</reference>
<protein>
    <recommendedName>
        <fullName evidence="1">Fumarate hydratase class II</fullName>
        <shortName evidence="1">Fumarase C</shortName>
        <ecNumber evidence="1">4.2.1.2</ecNumber>
    </recommendedName>
    <alternativeName>
        <fullName evidence="1">Aerobic fumarase</fullName>
    </alternativeName>
    <alternativeName>
        <fullName evidence="1">Iron-independent fumarase</fullName>
    </alternativeName>
</protein>
<gene>
    <name evidence="1" type="primary">fumC</name>
    <name type="ordered locus">STY1653</name>
    <name type="ordered locus">t1337</name>
</gene>
<dbReference type="EC" id="4.2.1.2" evidence="1"/>
<dbReference type="EMBL" id="AL513382">
    <property type="protein sequence ID" value="CAD01898.1"/>
    <property type="molecule type" value="Genomic_DNA"/>
</dbReference>
<dbReference type="EMBL" id="AE014613">
    <property type="protein sequence ID" value="AAO68985.1"/>
    <property type="molecule type" value="Genomic_DNA"/>
</dbReference>
<dbReference type="RefSeq" id="NP_456063.1">
    <property type="nucleotide sequence ID" value="NC_003198.1"/>
</dbReference>
<dbReference type="RefSeq" id="WP_000259129.1">
    <property type="nucleotide sequence ID" value="NZ_WSUR01000011.1"/>
</dbReference>
<dbReference type="SMR" id="Q8Z6R6"/>
<dbReference type="STRING" id="220341.gene:17585588"/>
<dbReference type="KEGG" id="stt:t1337"/>
<dbReference type="KEGG" id="sty:STY1653"/>
<dbReference type="PATRIC" id="fig|220341.7.peg.1664"/>
<dbReference type="eggNOG" id="COG0114">
    <property type="taxonomic scope" value="Bacteria"/>
</dbReference>
<dbReference type="HOGENOM" id="CLU_021594_4_1_6"/>
<dbReference type="OMA" id="AKWRAQT"/>
<dbReference type="OrthoDB" id="9802809at2"/>
<dbReference type="UniPathway" id="UPA00223">
    <property type="reaction ID" value="UER01007"/>
</dbReference>
<dbReference type="Proteomes" id="UP000000541">
    <property type="component" value="Chromosome"/>
</dbReference>
<dbReference type="Proteomes" id="UP000002670">
    <property type="component" value="Chromosome"/>
</dbReference>
<dbReference type="GO" id="GO:0005737">
    <property type="term" value="C:cytoplasm"/>
    <property type="evidence" value="ECO:0007669"/>
    <property type="project" value="UniProtKB-SubCell"/>
</dbReference>
<dbReference type="GO" id="GO:0004333">
    <property type="term" value="F:fumarate hydratase activity"/>
    <property type="evidence" value="ECO:0007669"/>
    <property type="project" value="UniProtKB-UniRule"/>
</dbReference>
<dbReference type="GO" id="GO:0006106">
    <property type="term" value="P:fumarate metabolic process"/>
    <property type="evidence" value="ECO:0007669"/>
    <property type="project" value="InterPro"/>
</dbReference>
<dbReference type="GO" id="GO:0006108">
    <property type="term" value="P:malate metabolic process"/>
    <property type="evidence" value="ECO:0007669"/>
    <property type="project" value="TreeGrafter"/>
</dbReference>
<dbReference type="GO" id="GO:0006099">
    <property type="term" value="P:tricarboxylic acid cycle"/>
    <property type="evidence" value="ECO:0007669"/>
    <property type="project" value="UniProtKB-UniRule"/>
</dbReference>
<dbReference type="CDD" id="cd01362">
    <property type="entry name" value="Fumarase_classII"/>
    <property type="match status" value="1"/>
</dbReference>
<dbReference type="FunFam" id="1.10.40.30:FF:000002">
    <property type="entry name" value="Fumarate hydratase class II"/>
    <property type="match status" value="1"/>
</dbReference>
<dbReference type="FunFam" id="1.10.275.10:FF:000001">
    <property type="entry name" value="Fumarate hydratase, mitochondrial"/>
    <property type="match status" value="1"/>
</dbReference>
<dbReference type="FunFam" id="1.20.200.10:FF:000001">
    <property type="entry name" value="Fumarate hydratase, mitochondrial"/>
    <property type="match status" value="1"/>
</dbReference>
<dbReference type="Gene3D" id="1.10.40.30">
    <property type="entry name" value="Fumarase/aspartase (C-terminal domain)"/>
    <property type="match status" value="1"/>
</dbReference>
<dbReference type="Gene3D" id="1.20.200.10">
    <property type="entry name" value="Fumarase/aspartase (Central domain)"/>
    <property type="match status" value="1"/>
</dbReference>
<dbReference type="Gene3D" id="1.10.275.10">
    <property type="entry name" value="Fumarase/aspartase (N-terminal domain)"/>
    <property type="match status" value="1"/>
</dbReference>
<dbReference type="HAMAP" id="MF_00743">
    <property type="entry name" value="FumaraseC"/>
    <property type="match status" value="1"/>
</dbReference>
<dbReference type="InterPro" id="IPR005677">
    <property type="entry name" value="Fum_hydII"/>
</dbReference>
<dbReference type="InterPro" id="IPR024083">
    <property type="entry name" value="Fumarase/histidase_N"/>
</dbReference>
<dbReference type="InterPro" id="IPR018951">
    <property type="entry name" value="Fumarase_C_C"/>
</dbReference>
<dbReference type="InterPro" id="IPR020557">
    <property type="entry name" value="Fumarate_lyase_CS"/>
</dbReference>
<dbReference type="InterPro" id="IPR000362">
    <property type="entry name" value="Fumarate_lyase_fam"/>
</dbReference>
<dbReference type="InterPro" id="IPR022761">
    <property type="entry name" value="Fumarate_lyase_N"/>
</dbReference>
<dbReference type="InterPro" id="IPR008948">
    <property type="entry name" value="L-Aspartase-like"/>
</dbReference>
<dbReference type="NCBIfam" id="TIGR00979">
    <property type="entry name" value="fumC_II"/>
    <property type="match status" value="1"/>
</dbReference>
<dbReference type="NCBIfam" id="NF008909">
    <property type="entry name" value="PRK12273.1"/>
    <property type="match status" value="1"/>
</dbReference>
<dbReference type="PANTHER" id="PTHR11444">
    <property type="entry name" value="ASPARTATEAMMONIA/ARGININOSUCCINATE/ADENYLOSUCCINATE LYASE"/>
    <property type="match status" value="1"/>
</dbReference>
<dbReference type="PANTHER" id="PTHR11444:SF1">
    <property type="entry name" value="FUMARATE HYDRATASE, MITOCHONDRIAL"/>
    <property type="match status" value="1"/>
</dbReference>
<dbReference type="Pfam" id="PF10415">
    <property type="entry name" value="FumaraseC_C"/>
    <property type="match status" value="1"/>
</dbReference>
<dbReference type="Pfam" id="PF00206">
    <property type="entry name" value="Lyase_1"/>
    <property type="match status" value="1"/>
</dbReference>
<dbReference type="PRINTS" id="PR00145">
    <property type="entry name" value="ARGSUCLYASE"/>
</dbReference>
<dbReference type="PRINTS" id="PR00149">
    <property type="entry name" value="FUMRATELYASE"/>
</dbReference>
<dbReference type="SUPFAM" id="SSF48557">
    <property type="entry name" value="L-aspartase-like"/>
    <property type="match status" value="1"/>
</dbReference>
<dbReference type="PROSITE" id="PS00163">
    <property type="entry name" value="FUMARATE_LYASES"/>
    <property type="match status" value="1"/>
</dbReference>